<gene>
    <name evidence="1" type="primary">acpS</name>
    <name type="ordered locus">LBF_2564</name>
</gene>
<comment type="function">
    <text evidence="1">Transfers the 4'-phosphopantetheine moiety from coenzyme A to a Ser of acyl-carrier-protein.</text>
</comment>
<comment type="catalytic activity">
    <reaction evidence="1">
        <text>apo-[ACP] + CoA = holo-[ACP] + adenosine 3',5'-bisphosphate + H(+)</text>
        <dbReference type="Rhea" id="RHEA:12068"/>
        <dbReference type="Rhea" id="RHEA-COMP:9685"/>
        <dbReference type="Rhea" id="RHEA-COMP:9690"/>
        <dbReference type="ChEBI" id="CHEBI:15378"/>
        <dbReference type="ChEBI" id="CHEBI:29999"/>
        <dbReference type="ChEBI" id="CHEBI:57287"/>
        <dbReference type="ChEBI" id="CHEBI:58343"/>
        <dbReference type="ChEBI" id="CHEBI:64479"/>
        <dbReference type="EC" id="2.7.8.7"/>
    </reaction>
</comment>
<comment type="cofactor">
    <cofactor evidence="1">
        <name>Mg(2+)</name>
        <dbReference type="ChEBI" id="CHEBI:18420"/>
    </cofactor>
</comment>
<comment type="subcellular location">
    <subcellularLocation>
        <location evidence="1">Cytoplasm</location>
    </subcellularLocation>
</comment>
<comment type="similarity">
    <text evidence="1">Belongs to the P-Pant transferase superfamily. AcpS family.</text>
</comment>
<evidence type="ECO:0000255" key="1">
    <source>
        <dbReference type="HAMAP-Rule" id="MF_00101"/>
    </source>
</evidence>
<accession>B0SE17</accession>
<protein>
    <recommendedName>
        <fullName evidence="1">Holo-[acyl-carrier-protein] synthase</fullName>
        <shortName evidence="1">Holo-ACP synthase</shortName>
        <ecNumber evidence="1">2.7.8.7</ecNumber>
    </recommendedName>
    <alternativeName>
        <fullName evidence="1">4'-phosphopantetheinyl transferase AcpS</fullName>
    </alternativeName>
</protein>
<name>ACPS_LEPBA</name>
<reference key="1">
    <citation type="journal article" date="2008" name="PLoS ONE">
        <title>Genome sequence of the saprophyte Leptospira biflexa provides insights into the evolution of Leptospira and the pathogenesis of leptospirosis.</title>
        <authorList>
            <person name="Picardeau M."/>
            <person name="Bulach D.M."/>
            <person name="Bouchier C."/>
            <person name="Zuerner R.L."/>
            <person name="Zidane N."/>
            <person name="Wilson P.J."/>
            <person name="Creno S."/>
            <person name="Kuczek E.S."/>
            <person name="Bommezzadri S."/>
            <person name="Davis J.C."/>
            <person name="McGrath A."/>
            <person name="Johnson M.J."/>
            <person name="Boursaux-Eude C."/>
            <person name="Seemann T."/>
            <person name="Rouy Z."/>
            <person name="Coppel R.L."/>
            <person name="Rood J.I."/>
            <person name="Lajus A."/>
            <person name="Davies J.K."/>
            <person name="Medigue C."/>
            <person name="Adler B."/>
        </authorList>
    </citation>
    <scope>NUCLEOTIDE SEQUENCE [LARGE SCALE GENOMIC DNA]</scope>
    <source>
        <strain>Patoc 1 / Ames</strain>
    </source>
</reference>
<proteinExistence type="inferred from homology"/>
<keyword id="KW-0963">Cytoplasm</keyword>
<keyword id="KW-0275">Fatty acid biosynthesis</keyword>
<keyword id="KW-0276">Fatty acid metabolism</keyword>
<keyword id="KW-0444">Lipid biosynthesis</keyword>
<keyword id="KW-0443">Lipid metabolism</keyword>
<keyword id="KW-0460">Magnesium</keyword>
<keyword id="KW-0479">Metal-binding</keyword>
<keyword id="KW-0808">Transferase</keyword>
<organism>
    <name type="scientific">Leptospira biflexa serovar Patoc (strain Patoc 1 / Ames)</name>
    <dbReference type="NCBI Taxonomy" id="355278"/>
    <lineage>
        <taxon>Bacteria</taxon>
        <taxon>Pseudomonadati</taxon>
        <taxon>Spirochaetota</taxon>
        <taxon>Spirochaetia</taxon>
        <taxon>Leptospirales</taxon>
        <taxon>Leptospiraceae</taxon>
        <taxon>Leptospira</taxon>
    </lineage>
</organism>
<dbReference type="EC" id="2.7.8.7" evidence="1"/>
<dbReference type="EMBL" id="CP000777">
    <property type="protein sequence ID" value="ABZ95048.1"/>
    <property type="molecule type" value="Genomic_DNA"/>
</dbReference>
<dbReference type="RefSeq" id="WP_012389584.1">
    <property type="nucleotide sequence ID" value="NC_010842.1"/>
</dbReference>
<dbReference type="SMR" id="B0SE17"/>
<dbReference type="KEGG" id="lbf:LBF_2564"/>
<dbReference type="HOGENOM" id="CLU_089696_2_1_12"/>
<dbReference type="GO" id="GO:0005737">
    <property type="term" value="C:cytoplasm"/>
    <property type="evidence" value="ECO:0007669"/>
    <property type="project" value="UniProtKB-SubCell"/>
</dbReference>
<dbReference type="GO" id="GO:0008897">
    <property type="term" value="F:holo-[acyl-carrier-protein] synthase activity"/>
    <property type="evidence" value="ECO:0007669"/>
    <property type="project" value="UniProtKB-UniRule"/>
</dbReference>
<dbReference type="GO" id="GO:0000287">
    <property type="term" value="F:magnesium ion binding"/>
    <property type="evidence" value="ECO:0007669"/>
    <property type="project" value="UniProtKB-UniRule"/>
</dbReference>
<dbReference type="GO" id="GO:0006633">
    <property type="term" value="P:fatty acid biosynthetic process"/>
    <property type="evidence" value="ECO:0007669"/>
    <property type="project" value="UniProtKB-UniRule"/>
</dbReference>
<dbReference type="Gene3D" id="3.90.470.20">
    <property type="entry name" value="4'-phosphopantetheinyl transferase domain"/>
    <property type="match status" value="1"/>
</dbReference>
<dbReference type="HAMAP" id="MF_00101">
    <property type="entry name" value="AcpS"/>
    <property type="match status" value="1"/>
</dbReference>
<dbReference type="InterPro" id="IPR008278">
    <property type="entry name" value="4-PPantetheinyl_Trfase_dom"/>
</dbReference>
<dbReference type="InterPro" id="IPR037143">
    <property type="entry name" value="4-PPantetheinyl_Trfase_dom_sf"/>
</dbReference>
<dbReference type="InterPro" id="IPR002582">
    <property type="entry name" value="ACPS"/>
</dbReference>
<dbReference type="InterPro" id="IPR004568">
    <property type="entry name" value="Ppantetheine-prot_Trfase_dom"/>
</dbReference>
<dbReference type="NCBIfam" id="TIGR00516">
    <property type="entry name" value="acpS"/>
    <property type="match status" value="1"/>
</dbReference>
<dbReference type="NCBIfam" id="TIGR00556">
    <property type="entry name" value="pantethn_trn"/>
    <property type="match status" value="1"/>
</dbReference>
<dbReference type="Pfam" id="PF01648">
    <property type="entry name" value="ACPS"/>
    <property type="match status" value="1"/>
</dbReference>
<dbReference type="SUPFAM" id="SSF56214">
    <property type="entry name" value="4'-phosphopantetheinyl transferase"/>
    <property type="match status" value="1"/>
</dbReference>
<feature type="chain" id="PRO_1000093889" description="Holo-[acyl-carrier-protein] synthase">
    <location>
        <begin position="1"/>
        <end position="127"/>
    </location>
</feature>
<feature type="binding site" evidence="1">
    <location>
        <position position="7"/>
    </location>
    <ligand>
        <name>Mg(2+)</name>
        <dbReference type="ChEBI" id="CHEBI:18420"/>
    </ligand>
</feature>
<feature type="binding site" evidence="1">
    <location>
        <position position="56"/>
    </location>
    <ligand>
        <name>Mg(2+)</name>
        <dbReference type="ChEBI" id="CHEBI:18420"/>
    </ligand>
</feature>
<sequence length="127" mass="14422">MLSVGNDIVENERIRELLQKHGDRFLKRVFTDDEVEYCHKHKDPVPFLAGRFACKEAVIKALNLEPGQVADMREIELAGTNFGKKTLVIHGKTEKFFREKGFTGSSVSISHADHYSTAVVVFFKEPK</sequence>